<evidence type="ECO:0000250" key="1">
    <source>
        <dbReference type="UniProtKB" id="Q9CWE0"/>
    </source>
</evidence>
<evidence type="ECO:0000269" key="2">
    <source>
    </source>
</evidence>
<evidence type="ECO:0000303" key="3">
    <source>
    </source>
</evidence>
<evidence type="ECO:0000303" key="4">
    <source>
    </source>
</evidence>
<evidence type="ECO:0000303" key="5">
    <source ref="1"/>
</evidence>
<evidence type="ECO:0000305" key="6"/>
<evidence type="ECO:0000312" key="7">
    <source>
        <dbReference type="HGNC" id="HGNC:28836"/>
    </source>
</evidence>
<evidence type="ECO:0007744" key="8">
    <source>
    </source>
</evidence>
<evidence type="ECO:0007744" key="9">
    <source>
    </source>
</evidence>
<evidence type="ECO:0007744" key="10">
    <source>
    </source>
</evidence>
<evidence type="ECO:0007744" key="11">
    <source>
    </source>
</evidence>
<proteinExistence type="evidence at protein level"/>
<gene>
    <name evidence="7" type="primary">MTFR1L</name>
    <name type="synonym">FAM54B</name>
    <name type="ORF">HYST1888</name>
    <name type="ORF">MSTP116</name>
</gene>
<sequence>MSGMEATVTIPIWQNKPHGAARSVVRRIGTNLPLKPCARASFETLPNISDLCLRDVPPVPTLADIAWIAADEEETYARVRSDTRPLRHTWKPSPLIVMQRNASVPNLRGSEERLLALKKPALPALSRTTELQDELSHLRSQIAKIVAADAASASLTPDFLSPGSSNVSSPLPCFGSSFHSTTSFVISDITEETEVEVPELPSVPLLCSASPECCKPEHKAACSSSEEDDCVSLSKASSFADMMGILKDFHRMKQSQDLNRSLLKEEDPAVLISEVLRRKFALKEEDISRKGN</sequence>
<organism>
    <name type="scientific">Homo sapiens</name>
    <name type="common">Human</name>
    <dbReference type="NCBI Taxonomy" id="9606"/>
    <lineage>
        <taxon>Eukaryota</taxon>
        <taxon>Metazoa</taxon>
        <taxon>Chordata</taxon>
        <taxon>Craniata</taxon>
        <taxon>Vertebrata</taxon>
        <taxon>Euteleostomi</taxon>
        <taxon>Mammalia</taxon>
        <taxon>Eutheria</taxon>
        <taxon>Euarchontoglires</taxon>
        <taxon>Primates</taxon>
        <taxon>Haplorrhini</taxon>
        <taxon>Catarrhini</taxon>
        <taxon>Hominidae</taxon>
        <taxon>Homo</taxon>
    </lineage>
</organism>
<dbReference type="EMBL" id="AF173891">
    <property type="protein sequence ID" value="AAQ13638.1"/>
    <property type="status" value="ALT_FRAME"/>
    <property type="molecule type" value="mRNA"/>
</dbReference>
<dbReference type="EMBL" id="AB075880">
    <property type="protein sequence ID" value="BAD38662.1"/>
    <property type="molecule type" value="mRNA"/>
</dbReference>
<dbReference type="EMBL" id="AK290744">
    <property type="protein sequence ID" value="BAF83433.1"/>
    <property type="molecule type" value="mRNA"/>
</dbReference>
<dbReference type="EMBL" id="AL512766">
    <property type="protein sequence ID" value="CAC21683.1"/>
    <property type="molecule type" value="mRNA"/>
</dbReference>
<dbReference type="EMBL" id="BX647921">
    <property type="protein sequence ID" value="CAH56194.1"/>
    <property type="molecule type" value="mRNA"/>
</dbReference>
<dbReference type="EMBL" id="AL020996">
    <property type="status" value="NOT_ANNOTATED_CDS"/>
    <property type="molecule type" value="Genomic_DNA"/>
</dbReference>
<dbReference type="EMBL" id="CH471059">
    <property type="protein sequence ID" value="EAX07865.1"/>
    <property type="molecule type" value="Genomic_DNA"/>
</dbReference>
<dbReference type="EMBL" id="CH471059">
    <property type="protein sequence ID" value="EAX07866.1"/>
    <property type="molecule type" value="Genomic_DNA"/>
</dbReference>
<dbReference type="EMBL" id="CH471059">
    <property type="protein sequence ID" value="EAX07868.1"/>
    <property type="molecule type" value="Genomic_DNA"/>
</dbReference>
<dbReference type="EMBL" id="BC017175">
    <property type="protein sequence ID" value="AAH17175.1"/>
    <property type="molecule type" value="mRNA"/>
</dbReference>
<dbReference type="CCDS" id="CCDS41284.1">
    <molecule id="Q9H019-1"/>
</dbReference>
<dbReference type="CCDS" id="CCDS44089.1">
    <molecule id="Q9H019-2"/>
</dbReference>
<dbReference type="RefSeq" id="NP_001093095.1">
    <molecule id="Q9H019-1"/>
    <property type="nucleotide sequence ID" value="NM_001099625.2"/>
</dbReference>
<dbReference type="RefSeq" id="NP_001093096.1">
    <molecule id="Q9H019-1"/>
    <property type="nucleotide sequence ID" value="NM_001099626.2"/>
</dbReference>
<dbReference type="RefSeq" id="NP_001093097.1">
    <molecule id="Q9H019-2"/>
    <property type="nucleotide sequence ID" value="NM_001099627.2"/>
</dbReference>
<dbReference type="RefSeq" id="NP_062457.3">
    <molecule id="Q9H019-1"/>
    <property type="nucleotide sequence ID" value="NM_019557.5"/>
</dbReference>
<dbReference type="BioGRID" id="121106">
    <property type="interactions" value="66"/>
</dbReference>
<dbReference type="FunCoup" id="Q9H019">
    <property type="interactions" value="1019"/>
</dbReference>
<dbReference type="IntAct" id="Q9H019">
    <property type="interactions" value="39"/>
</dbReference>
<dbReference type="MINT" id="Q9H019"/>
<dbReference type="STRING" id="9606.ENSP00000363419"/>
<dbReference type="GlyGen" id="Q9H019">
    <property type="glycosylation" value="1 site, 1 O-linked glycan (1 site)"/>
</dbReference>
<dbReference type="iPTMnet" id="Q9H019"/>
<dbReference type="PhosphoSitePlus" id="Q9H019"/>
<dbReference type="BioMuta" id="MTFR1L"/>
<dbReference type="DMDM" id="190359323"/>
<dbReference type="jPOST" id="Q9H019"/>
<dbReference type="MassIVE" id="Q9H019"/>
<dbReference type="PaxDb" id="9606-ENSP00000363419"/>
<dbReference type="PeptideAtlas" id="Q9H019"/>
<dbReference type="ProteomicsDB" id="80198">
    <molecule id="Q9H019-1"/>
</dbReference>
<dbReference type="ProteomicsDB" id="80199">
    <molecule id="Q9H019-2"/>
</dbReference>
<dbReference type="ProteomicsDB" id="80200">
    <molecule id="Q9H019-3"/>
</dbReference>
<dbReference type="Pumba" id="Q9H019"/>
<dbReference type="TopDownProteomics" id="Q9H019-2">
    <molecule id="Q9H019-2"/>
</dbReference>
<dbReference type="Antibodypedia" id="30499">
    <property type="antibodies" value="18 antibodies from 8 providers"/>
</dbReference>
<dbReference type="DNASU" id="56181"/>
<dbReference type="Ensembl" id="ENST00000374300.7">
    <molecule id="Q9H019-1"/>
    <property type="protein sequence ID" value="ENSP00000363418.3"/>
    <property type="gene ID" value="ENSG00000117640.18"/>
</dbReference>
<dbReference type="Ensembl" id="ENST00000374301.7">
    <molecule id="Q9H019-1"/>
    <property type="protein sequence ID" value="ENSP00000363419.3"/>
    <property type="gene ID" value="ENSG00000117640.18"/>
</dbReference>
<dbReference type="Ensembl" id="ENST00000374303.7">
    <molecule id="Q9H019-1"/>
    <property type="protein sequence ID" value="ENSP00000363421.2"/>
    <property type="gene ID" value="ENSG00000117640.18"/>
</dbReference>
<dbReference type="Ensembl" id="ENST00000374307.9">
    <molecule id="Q9H019-3"/>
    <property type="protein sequence ID" value="ENSP00000363426.5"/>
    <property type="gene ID" value="ENSG00000117640.18"/>
</dbReference>
<dbReference type="Ensembl" id="ENST00000466284.1">
    <molecule id="Q9H019-2"/>
    <property type="protein sequence ID" value="ENSP00000434751.1"/>
    <property type="gene ID" value="ENSG00000117640.18"/>
</dbReference>
<dbReference type="Ensembl" id="ENST00000474295.5">
    <molecule id="Q9H019-2"/>
    <property type="protein sequence ID" value="ENSP00000435461.1"/>
    <property type="gene ID" value="ENSG00000117640.18"/>
</dbReference>
<dbReference type="GeneID" id="56181"/>
<dbReference type="KEGG" id="hsa:56181"/>
<dbReference type="MANE-Select" id="ENST00000374303.7">
    <property type="protein sequence ID" value="ENSP00000363421.2"/>
    <property type="RefSeq nucleotide sequence ID" value="NM_001099625.2"/>
    <property type="RefSeq protein sequence ID" value="NP_001093095.1"/>
</dbReference>
<dbReference type="UCSC" id="uc001bkq.5">
    <molecule id="Q9H019-1"/>
    <property type="organism name" value="human"/>
</dbReference>
<dbReference type="AGR" id="HGNC:28836"/>
<dbReference type="CTD" id="56181"/>
<dbReference type="DisGeNET" id="56181"/>
<dbReference type="GeneCards" id="MTFR1L"/>
<dbReference type="HGNC" id="HGNC:28836">
    <property type="gene designation" value="MTFR1L"/>
</dbReference>
<dbReference type="HPA" id="ENSG00000117640">
    <property type="expression patterns" value="Low tissue specificity"/>
</dbReference>
<dbReference type="MIM" id="620765">
    <property type="type" value="gene"/>
</dbReference>
<dbReference type="neXtProt" id="NX_Q9H019"/>
<dbReference type="OpenTargets" id="ENSG00000117640"/>
<dbReference type="PharmGKB" id="PA142671888"/>
<dbReference type="VEuPathDB" id="HostDB:ENSG00000117640"/>
<dbReference type="eggNOG" id="ENOG502QRAC">
    <property type="taxonomic scope" value="Eukaryota"/>
</dbReference>
<dbReference type="GeneTree" id="ENSGT00950000183215"/>
<dbReference type="InParanoid" id="Q9H019"/>
<dbReference type="OMA" id="LRHKWKP"/>
<dbReference type="OrthoDB" id="9930891at2759"/>
<dbReference type="PAN-GO" id="Q9H019">
    <property type="GO annotations" value="3 GO annotations based on evolutionary models"/>
</dbReference>
<dbReference type="PhylomeDB" id="Q9H019"/>
<dbReference type="TreeFam" id="TF331404"/>
<dbReference type="PathwayCommons" id="Q9H019"/>
<dbReference type="SignaLink" id="Q9H019"/>
<dbReference type="BioGRID-ORCS" id="56181">
    <property type="hits" value="10 hits in 1159 CRISPR screens"/>
</dbReference>
<dbReference type="CD-CODE" id="DEE660B4">
    <property type="entry name" value="Stress granule"/>
</dbReference>
<dbReference type="ChiTaRS" id="MTFR1L">
    <property type="organism name" value="human"/>
</dbReference>
<dbReference type="GeneWiki" id="FAM54B"/>
<dbReference type="GenomeRNAi" id="56181"/>
<dbReference type="Pharos" id="Q9H019">
    <property type="development level" value="Tdark"/>
</dbReference>
<dbReference type="PRO" id="PR:Q9H019"/>
<dbReference type="Proteomes" id="UP000005640">
    <property type="component" value="Chromosome 1"/>
</dbReference>
<dbReference type="RNAct" id="Q9H019">
    <property type="molecule type" value="protein"/>
</dbReference>
<dbReference type="Bgee" id="ENSG00000117640">
    <property type="expression patterns" value="Expressed in right adrenal gland and 176 other cell types or tissues"/>
</dbReference>
<dbReference type="ExpressionAtlas" id="Q9H019">
    <property type="expression patterns" value="baseline and differential"/>
</dbReference>
<dbReference type="GO" id="GO:0005741">
    <property type="term" value="C:mitochondrial outer membrane"/>
    <property type="evidence" value="ECO:0007669"/>
    <property type="project" value="UniProtKB-SubCell"/>
</dbReference>
<dbReference type="GO" id="GO:0005739">
    <property type="term" value="C:mitochondrion"/>
    <property type="evidence" value="ECO:0006056"/>
    <property type="project" value="FlyBase"/>
</dbReference>
<dbReference type="GO" id="GO:0009060">
    <property type="term" value="P:aerobic respiration"/>
    <property type="evidence" value="ECO:0000318"/>
    <property type="project" value="GO_Central"/>
</dbReference>
<dbReference type="GO" id="GO:0000266">
    <property type="term" value="P:mitochondrial fission"/>
    <property type="evidence" value="ECO:0000318"/>
    <property type="project" value="GO_Central"/>
</dbReference>
<dbReference type="InterPro" id="IPR007972">
    <property type="entry name" value="Mtfr1"/>
</dbReference>
<dbReference type="PANTHER" id="PTHR14215:SF3">
    <property type="entry name" value="MITOCHONDRIAL FISSION REGULATOR 1-LIKE"/>
    <property type="match status" value="1"/>
</dbReference>
<dbReference type="PANTHER" id="PTHR14215">
    <property type="entry name" value="PROTEIN OF UNKNOWN FUNCTION DUF729"/>
    <property type="match status" value="1"/>
</dbReference>
<dbReference type="Pfam" id="PF05308">
    <property type="entry name" value="Mito_fiss_reg"/>
    <property type="match status" value="1"/>
</dbReference>
<name>MFR1L_HUMAN</name>
<comment type="function">
    <text evidence="2">Mitochondrial protein required for adaptation of miochondrial dynamics to metabolic changes. Regulates mitochondrial morphology at steady state and mediates AMPK-dependent stress-induced mitochondrial fragmentation via the control of OPA1 levels.</text>
</comment>
<comment type="interaction">
    <interactant intactId="EBI-2824497">
        <id>Q9H019</id>
    </interactant>
    <interactant intactId="EBI-8643161">
        <id>Q9NX04</id>
        <label>AIRIM</label>
    </interactant>
    <organismsDiffer>false</organismsDiffer>
    <experiments>3</experiments>
</comment>
<comment type="interaction">
    <interactant intactId="EBI-2824497">
        <id>Q9H019</id>
    </interactant>
    <interactant intactId="EBI-17183751">
        <id>X5D778</id>
        <label>ANKRD11</label>
    </interactant>
    <organismsDiffer>false</organismsDiffer>
    <experiments>3</experiments>
</comment>
<comment type="interaction">
    <interactant intactId="EBI-2824497">
        <id>Q9H019</id>
    </interactant>
    <interactant intactId="EBI-3506974">
        <id>Q9NVT9</id>
        <label>ARMC1</label>
    </interactant>
    <organismsDiffer>false</organismsDiffer>
    <experiments>7</experiments>
</comment>
<comment type="interaction">
    <interactant intactId="EBI-2824497">
        <id>Q9H019</id>
    </interactant>
    <interactant intactId="EBI-743033">
        <id>Q9NZN8</id>
        <label>CNOT2</label>
    </interactant>
    <organismsDiffer>false</organismsDiffer>
    <experiments>3</experiments>
</comment>
<comment type="interaction">
    <interactant intactId="EBI-2824497">
        <id>Q9H019</id>
    </interactant>
    <interactant intactId="EBI-743105">
        <id>Q5JVL4</id>
        <label>EFHC1</label>
    </interactant>
    <organismsDiffer>false</organismsDiffer>
    <experiments>3</experiments>
</comment>
<comment type="interaction">
    <interactant intactId="EBI-2824497">
        <id>Q9H019</id>
    </interactant>
    <interactant intactId="EBI-749530">
        <id>P43365</id>
        <label>MAGEA12</label>
    </interactant>
    <organismsDiffer>false</organismsDiffer>
    <experiments>6</experiments>
</comment>
<comment type="interaction">
    <interactant intactId="EBI-2824497">
        <id>Q9H019</id>
    </interactant>
    <interactant intactId="EBI-7254550">
        <id>P36508</id>
        <label>ZNF76</label>
    </interactant>
    <organismsDiffer>false</organismsDiffer>
    <experiments>3</experiments>
</comment>
<comment type="subcellular location">
    <subcellularLocation>
        <location evidence="2">Mitochondrion outer membrane</location>
        <topology evidence="2">Peripheral membrane protein</topology>
        <orientation evidence="2">Cytoplasmic side</orientation>
    </subcellularLocation>
</comment>
<comment type="alternative products">
    <event type="alternative splicing"/>
    <isoform>
        <id>Q9H019-1</id>
        <name>1</name>
        <sequence type="displayed"/>
    </isoform>
    <isoform>
        <id>Q9H019-2</id>
        <name>2</name>
        <sequence type="described" ref="VSP_034338"/>
    </isoform>
    <isoform>
        <id>Q9H019-3</id>
        <name>3</name>
        <sequence type="described" ref="VSP_034339"/>
    </isoform>
</comment>
<comment type="PTM">
    <text evidence="2">Phosphorylated by AMPK. Upon stress, phosphorylation at Ser-103 and Ser-238 by AMPK is sufficient to induce mitochondrial fragmentation.</text>
</comment>
<comment type="similarity">
    <text evidence="6">Belongs to the MTFR1 family.</text>
</comment>
<comment type="sequence caution" evidence="6">
    <conflict type="frameshift">
        <sequence resource="EMBL-CDS" id="AAQ13638"/>
    </conflict>
</comment>
<accession>Q9H019</accession>
<accession>A6NCB4</accession>
<accession>B7WNV5</accession>
<accession>D3DPJ4</accession>
<accession>Q63HP1</accession>
<accession>Q7Z2S7</accession>
<accession>Q9NUI7</accession>
<feature type="chain" id="PRO_0000341566" description="Mitochondrial fission regulator 1-like">
    <location>
        <begin position="1"/>
        <end position="292"/>
    </location>
</feature>
<feature type="modified residue" description="Phosphothreonine" evidence="11">
    <location>
        <position position="30"/>
    </location>
</feature>
<feature type="modified residue" description="Phosphoserine" evidence="11">
    <location>
        <position position="41"/>
    </location>
</feature>
<feature type="modified residue" description="Phosphoserine; by AMPK" evidence="2 11">
    <location>
        <position position="103"/>
    </location>
</feature>
<feature type="modified residue" description="Phosphoserine" evidence="11">
    <location>
        <position position="110"/>
    </location>
</feature>
<feature type="modified residue" description="Phosphoserine" evidence="1">
    <location>
        <position position="224"/>
    </location>
</feature>
<feature type="modified residue" description="Phosphoserine" evidence="1">
    <location>
        <position position="225"/>
    </location>
</feature>
<feature type="modified residue" description="Phosphoserine; by AMPK" evidence="2 9 10 11">
    <location>
        <position position="238"/>
    </location>
</feature>
<feature type="modified residue" description="Phosphoserine" evidence="8">
    <location>
        <position position="261"/>
    </location>
</feature>
<feature type="modified residue" description="Phosphoserine" evidence="9">
    <location>
        <position position="273"/>
    </location>
</feature>
<feature type="splice variant" id="VSP_034338" description="In isoform 2." evidence="3 4">
    <original>ASASLTPDFLSPGSSNVSSPLPCFGSSFHSTTSFVISDITEETEVEVPELPSVPLLCSASPECCKPEHKAACSSSEEDDCVSLSKASSFADMMGILKDFHRMKQSQDLNRSLLKEEDPAVLISEVLRRKFALKEEDISRKGN</original>
    <variation>VTSPRRQRWRSLSFHQSPCFVLPALNVANQNTKLPAVRLKRMTASLCPRPAALQT</variation>
    <location>
        <begin position="151"/>
        <end position="292"/>
    </location>
</feature>
<feature type="splice variant" id="VSP_034339" description="In isoform 3." evidence="5">
    <location>
        <begin position="151"/>
        <end position="162"/>
    </location>
</feature>
<feature type="sequence variant" id="VAR_044084" description="In dbSNP:rs35448678.">
    <original>P</original>
    <variation>S</variation>
    <location>
        <position position="58"/>
    </location>
</feature>
<feature type="mutagenesis site" description="Loss of phosphorylation by AMPK. No effect on mitochondrial morphology; when associated with A-238." evidence="2">
    <original>S</original>
    <variation>A</variation>
    <location>
        <position position="103"/>
    </location>
</feature>
<feature type="mutagenesis site" description="Leads to fragmentation of mitochondrial network; when associated with D-238." evidence="2">
    <original>S</original>
    <variation>D</variation>
    <location>
        <position position="103"/>
    </location>
</feature>
<feature type="mutagenesis site" description="Loss of phosphorylation by AMPK. No effect on mitochondrial morphology; when associated with A-103." evidence="2">
    <original>S</original>
    <variation>A</variation>
    <location>
        <position position="238"/>
    </location>
</feature>
<feature type="mutagenesis site" description="Leads to fragmentation of mitochondrial network; when associated with D-103." evidence="2">
    <original>S</original>
    <variation>D</variation>
    <location>
        <position position="238"/>
    </location>
</feature>
<feature type="sequence conflict" description="In Ref. 4; CAC21683." evidence="6" ref="4">
    <original>R</original>
    <variation>W</variation>
    <location>
        <position position="87"/>
    </location>
</feature>
<feature type="sequence conflict" description="In Ref. 4; CAC21683." evidence="6" ref="4">
    <original>S</original>
    <variation>G</variation>
    <location>
        <position position="136"/>
    </location>
</feature>
<feature type="sequence conflict" description="In Ref. 4; CAC21683." evidence="6" ref="4">
    <original>S</original>
    <variation>T</variation>
    <location>
        <position position="273"/>
    </location>
</feature>
<reference key="1">
    <citation type="submission" date="1999-08" db="EMBL/GenBank/DDBJ databases">
        <title>Homo sapiens normal heart mRNA MST116.</title>
        <authorList>
            <person name="Wang X.Y."/>
            <person name="Gong Q."/>
            <person name="Qin B.M."/>
            <person name="Sheng H."/>
            <person name="Liu Y.Q."/>
            <person name="Zhao B."/>
            <person name="Liu B."/>
            <person name="Zhang Q."/>
            <person name="Zheng W.Y."/>
            <person name="Xu H.S."/>
            <person name="Liu B.H."/>
            <person name="Hui R.T."/>
        </authorList>
    </citation>
    <scope>NUCLEOTIDE SEQUENCE [LARGE SCALE MRNA] (ISOFORM 3)</scope>
    <source>
        <tissue>Heart</tissue>
    </source>
</reference>
<reference key="2">
    <citation type="journal article" date="2004" name="Oncogene">
        <title>Expression profiling and differential screening between hepatoblastomas and the corresponding normal livers: identification of high expression of the PLK1 oncogene as a poor-prognostic indicator of hepatoblastomas.</title>
        <authorList>
            <person name="Yamada S."/>
            <person name="Ohira M."/>
            <person name="Horie H."/>
            <person name="Ando K."/>
            <person name="Takayasu H."/>
            <person name="Suzuki Y."/>
            <person name="Sugano S."/>
            <person name="Hirata T."/>
            <person name="Goto T."/>
            <person name="Matsunaga T."/>
            <person name="Hiyama E."/>
            <person name="Hayashi Y."/>
            <person name="Ando H."/>
            <person name="Suita S."/>
            <person name="Kaneko M."/>
            <person name="Sasaki F."/>
            <person name="Hashizume K."/>
            <person name="Ohnuma N."/>
            <person name="Nakagawara A."/>
        </authorList>
    </citation>
    <scope>NUCLEOTIDE SEQUENCE [LARGE SCALE MRNA] (ISOFORM 1)</scope>
    <source>
        <tissue>Liver</tissue>
    </source>
</reference>
<reference key="3">
    <citation type="journal article" date="2004" name="Nat. Genet.">
        <title>Complete sequencing and characterization of 21,243 full-length human cDNAs.</title>
        <authorList>
            <person name="Ota T."/>
            <person name="Suzuki Y."/>
            <person name="Nishikawa T."/>
            <person name="Otsuki T."/>
            <person name="Sugiyama T."/>
            <person name="Irie R."/>
            <person name="Wakamatsu A."/>
            <person name="Hayashi K."/>
            <person name="Sato H."/>
            <person name="Nagai K."/>
            <person name="Kimura K."/>
            <person name="Makita H."/>
            <person name="Sekine M."/>
            <person name="Obayashi M."/>
            <person name="Nishi T."/>
            <person name="Shibahara T."/>
            <person name="Tanaka T."/>
            <person name="Ishii S."/>
            <person name="Yamamoto J."/>
            <person name="Saito K."/>
            <person name="Kawai Y."/>
            <person name="Isono Y."/>
            <person name="Nakamura Y."/>
            <person name="Nagahari K."/>
            <person name="Murakami K."/>
            <person name="Yasuda T."/>
            <person name="Iwayanagi T."/>
            <person name="Wagatsuma M."/>
            <person name="Shiratori A."/>
            <person name="Sudo H."/>
            <person name="Hosoiri T."/>
            <person name="Kaku Y."/>
            <person name="Kodaira H."/>
            <person name="Kondo H."/>
            <person name="Sugawara M."/>
            <person name="Takahashi M."/>
            <person name="Kanda K."/>
            <person name="Yokoi T."/>
            <person name="Furuya T."/>
            <person name="Kikkawa E."/>
            <person name="Omura Y."/>
            <person name="Abe K."/>
            <person name="Kamihara K."/>
            <person name="Katsuta N."/>
            <person name="Sato K."/>
            <person name="Tanikawa M."/>
            <person name="Yamazaki M."/>
            <person name="Ninomiya K."/>
            <person name="Ishibashi T."/>
            <person name="Yamashita H."/>
            <person name="Murakawa K."/>
            <person name="Fujimori K."/>
            <person name="Tanai H."/>
            <person name="Kimata M."/>
            <person name="Watanabe M."/>
            <person name="Hiraoka S."/>
            <person name="Chiba Y."/>
            <person name="Ishida S."/>
            <person name="Ono Y."/>
            <person name="Takiguchi S."/>
            <person name="Watanabe S."/>
            <person name="Yosida M."/>
            <person name="Hotuta T."/>
            <person name="Kusano J."/>
            <person name="Kanehori K."/>
            <person name="Takahashi-Fujii A."/>
            <person name="Hara H."/>
            <person name="Tanase T.-O."/>
            <person name="Nomura Y."/>
            <person name="Togiya S."/>
            <person name="Komai F."/>
            <person name="Hara R."/>
            <person name="Takeuchi K."/>
            <person name="Arita M."/>
            <person name="Imose N."/>
            <person name="Musashino K."/>
            <person name="Yuuki H."/>
            <person name="Oshima A."/>
            <person name="Sasaki N."/>
            <person name="Aotsuka S."/>
            <person name="Yoshikawa Y."/>
            <person name="Matsunawa H."/>
            <person name="Ichihara T."/>
            <person name="Shiohata N."/>
            <person name="Sano S."/>
            <person name="Moriya S."/>
            <person name="Momiyama H."/>
            <person name="Satoh N."/>
            <person name="Takami S."/>
            <person name="Terashima Y."/>
            <person name="Suzuki O."/>
            <person name="Nakagawa S."/>
            <person name="Senoh A."/>
            <person name="Mizoguchi H."/>
            <person name="Goto Y."/>
            <person name="Shimizu F."/>
            <person name="Wakebe H."/>
            <person name="Hishigaki H."/>
            <person name="Watanabe T."/>
            <person name="Sugiyama A."/>
            <person name="Takemoto M."/>
            <person name="Kawakami B."/>
            <person name="Yamazaki M."/>
            <person name="Watanabe K."/>
            <person name="Kumagai A."/>
            <person name="Itakura S."/>
            <person name="Fukuzumi Y."/>
            <person name="Fujimori Y."/>
            <person name="Komiyama M."/>
            <person name="Tashiro H."/>
            <person name="Tanigami A."/>
            <person name="Fujiwara T."/>
            <person name="Ono T."/>
            <person name="Yamada K."/>
            <person name="Fujii Y."/>
            <person name="Ozaki K."/>
            <person name="Hirao M."/>
            <person name="Ohmori Y."/>
            <person name="Kawabata A."/>
            <person name="Hikiji T."/>
            <person name="Kobatake N."/>
            <person name="Inagaki H."/>
            <person name="Ikema Y."/>
            <person name="Okamoto S."/>
            <person name="Okitani R."/>
            <person name="Kawakami T."/>
            <person name="Noguchi S."/>
            <person name="Itoh T."/>
            <person name="Shigeta K."/>
            <person name="Senba T."/>
            <person name="Matsumura K."/>
            <person name="Nakajima Y."/>
            <person name="Mizuno T."/>
            <person name="Morinaga M."/>
            <person name="Sasaki M."/>
            <person name="Togashi T."/>
            <person name="Oyama M."/>
            <person name="Hata H."/>
            <person name="Watanabe M."/>
            <person name="Komatsu T."/>
            <person name="Mizushima-Sugano J."/>
            <person name="Satoh T."/>
            <person name="Shirai Y."/>
            <person name="Takahashi Y."/>
            <person name="Nakagawa K."/>
            <person name="Okumura K."/>
            <person name="Nagase T."/>
            <person name="Nomura N."/>
            <person name="Kikuchi H."/>
            <person name="Masuho Y."/>
            <person name="Yamashita R."/>
            <person name="Nakai K."/>
            <person name="Yada T."/>
            <person name="Nakamura Y."/>
            <person name="Ohara O."/>
            <person name="Isogai T."/>
            <person name="Sugano S."/>
        </authorList>
    </citation>
    <scope>NUCLEOTIDE SEQUENCE [LARGE SCALE MRNA] (ISOFORM 2)</scope>
</reference>
<reference key="4">
    <citation type="journal article" date="2007" name="BMC Genomics">
        <title>The full-ORF clone resource of the German cDNA consortium.</title>
        <authorList>
            <person name="Bechtel S."/>
            <person name="Rosenfelder H."/>
            <person name="Duda A."/>
            <person name="Schmidt C.P."/>
            <person name="Ernst U."/>
            <person name="Wellenreuther R."/>
            <person name="Mehrle A."/>
            <person name="Schuster C."/>
            <person name="Bahr A."/>
            <person name="Bloecker H."/>
            <person name="Heubner D."/>
            <person name="Hoerlein A."/>
            <person name="Michel G."/>
            <person name="Wedler H."/>
            <person name="Koehrer K."/>
            <person name="Ottenwaelder B."/>
            <person name="Poustka A."/>
            <person name="Wiemann S."/>
            <person name="Schupp I."/>
        </authorList>
    </citation>
    <scope>NUCLEOTIDE SEQUENCE [LARGE SCALE MRNA] (ISOFORMS 1 AND 2)</scope>
    <source>
        <tissue>Brain</tissue>
        <tissue>Cervix</tissue>
    </source>
</reference>
<reference key="5">
    <citation type="journal article" date="2006" name="Nature">
        <title>The DNA sequence and biological annotation of human chromosome 1.</title>
        <authorList>
            <person name="Gregory S.G."/>
            <person name="Barlow K.F."/>
            <person name="McLay K.E."/>
            <person name="Kaul R."/>
            <person name="Swarbreck D."/>
            <person name="Dunham A."/>
            <person name="Scott C.E."/>
            <person name="Howe K.L."/>
            <person name="Woodfine K."/>
            <person name="Spencer C.C.A."/>
            <person name="Jones M.C."/>
            <person name="Gillson C."/>
            <person name="Searle S."/>
            <person name="Zhou Y."/>
            <person name="Kokocinski F."/>
            <person name="McDonald L."/>
            <person name="Evans R."/>
            <person name="Phillips K."/>
            <person name="Atkinson A."/>
            <person name="Cooper R."/>
            <person name="Jones C."/>
            <person name="Hall R.E."/>
            <person name="Andrews T.D."/>
            <person name="Lloyd C."/>
            <person name="Ainscough R."/>
            <person name="Almeida J.P."/>
            <person name="Ambrose K.D."/>
            <person name="Anderson F."/>
            <person name="Andrew R.W."/>
            <person name="Ashwell R.I.S."/>
            <person name="Aubin K."/>
            <person name="Babbage A.K."/>
            <person name="Bagguley C.L."/>
            <person name="Bailey J."/>
            <person name="Beasley H."/>
            <person name="Bethel G."/>
            <person name="Bird C.P."/>
            <person name="Bray-Allen S."/>
            <person name="Brown J.Y."/>
            <person name="Brown A.J."/>
            <person name="Buckley D."/>
            <person name="Burton J."/>
            <person name="Bye J."/>
            <person name="Carder C."/>
            <person name="Chapman J.C."/>
            <person name="Clark S.Y."/>
            <person name="Clarke G."/>
            <person name="Clee C."/>
            <person name="Cobley V."/>
            <person name="Collier R.E."/>
            <person name="Corby N."/>
            <person name="Coville G.J."/>
            <person name="Davies J."/>
            <person name="Deadman R."/>
            <person name="Dunn M."/>
            <person name="Earthrowl M."/>
            <person name="Ellington A.G."/>
            <person name="Errington H."/>
            <person name="Frankish A."/>
            <person name="Frankland J."/>
            <person name="French L."/>
            <person name="Garner P."/>
            <person name="Garnett J."/>
            <person name="Gay L."/>
            <person name="Ghori M.R.J."/>
            <person name="Gibson R."/>
            <person name="Gilby L.M."/>
            <person name="Gillett W."/>
            <person name="Glithero R.J."/>
            <person name="Grafham D.V."/>
            <person name="Griffiths C."/>
            <person name="Griffiths-Jones S."/>
            <person name="Grocock R."/>
            <person name="Hammond S."/>
            <person name="Harrison E.S.I."/>
            <person name="Hart E."/>
            <person name="Haugen E."/>
            <person name="Heath P.D."/>
            <person name="Holmes S."/>
            <person name="Holt K."/>
            <person name="Howden P.J."/>
            <person name="Hunt A.R."/>
            <person name="Hunt S.E."/>
            <person name="Hunter G."/>
            <person name="Isherwood J."/>
            <person name="James R."/>
            <person name="Johnson C."/>
            <person name="Johnson D."/>
            <person name="Joy A."/>
            <person name="Kay M."/>
            <person name="Kershaw J.K."/>
            <person name="Kibukawa M."/>
            <person name="Kimberley A.M."/>
            <person name="King A."/>
            <person name="Knights A.J."/>
            <person name="Lad H."/>
            <person name="Laird G."/>
            <person name="Lawlor S."/>
            <person name="Leongamornlert D.A."/>
            <person name="Lloyd D.M."/>
            <person name="Loveland J."/>
            <person name="Lovell J."/>
            <person name="Lush M.J."/>
            <person name="Lyne R."/>
            <person name="Martin S."/>
            <person name="Mashreghi-Mohammadi M."/>
            <person name="Matthews L."/>
            <person name="Matthews N.S.W."/>
            <person name="McLaren S."/>
            <person name="Milne S."/>
            <person name="Mistry S."/>
            <person name="Moore M.J.F."/>
            <person name="Nickerson T."/>
            <person name="O'Dell C.N."/>
            <person name="Oliver K."/>
            <person name="Palmeiri A."/>
            <person name="Palmer S.A."/>
            <person name="Parker A."/>
            <person name="Patel D."/>
            <person name="Pearce A.V."/>
            <person name="Peck A.I."/>
            <person name="Pelan S."/>
            <person name="Phelps K."/>
            <person name="Phillimore B.J."/>
            <person name="Plumb R."/>
            <person name="Rajan J."/>
            <person name="Raymond C."/>
            <person name="Rouse G."/>
            <person name="Saenphimmachak C."/>
            <person name="Sehra H.K."/>
            <person name="Sheridan E."/>
            <person name="Shownkeen R."/>
            <person name="Sims S."/>
            <person name="Skuce C.D."/>
            <person name="Smith M."/>
            <person name="Steward C."/>
            <person name="Subramanian S."/>
            <person name="Sycamore N."/>
            <person name="Tracey A."/>
            <person name="Tromans A."/>
            <person name="Van Helmond Z."/>
            <person name="Wall M."/>
            <person name="Wallis J.M."/>
            <person name="White S."/>
            <person name="Whitehead S.L."/>
            <person name="Wilkinson J.E."/>
            <person name="Willey D.L."/>
            <person name="Williams H."/>
            <person name="Wilming L."/>
            <person name="Wray P.W."/>
            <person name="Wu Z."/>
            <person name="Coulson A."/>
            <person name="Vaudin M."/>
            <person name="Sulston J.E."/>
            <person name="Durbin R.M."/>
            <person name="Hubbard T."/>
            <person name="Wooster R."/>
            <person name="Dunham I."/>
            <person name="Carter N.P."/>
            <person name="McVean G."/>
            <person name="Ross M.T."/>
            <person name="Harrow J."/>
            <person name="Olson M.V."/>
            <person name="Beck S."/>
            <person name="Rogers J."/>
            <person name="Bentley D.R."/>
        </authorList>
    </citation>
    <scope>NUCLEOTIDE SEQUENCE [LARGE SCALE GENOMIC DNA]</scope>
</reference>
<reference key="6">
    <citation type="submission" date="2005-09" db="EMBL/GenBank/DDBJ databases">
        <authorList>
            <person name="Mural R.J."/>
            <person name="Istrail S."/>
            <person name="Sutton G.G."/>
            <person name="Florea L."/>
            <person name="Halpern A.L."/>
            <person name="Mobarry C.M."/>
            <person name="Lippert R."/>
            <person name="Walenz B."/>
            <person name="Shatkay H."/>
            <person name="Dew I."/>
            <person name="Miller J.R."/>
            <person name="Flanigan M.J."/>
            <person name="Edwards N.J."/>
            <person name="Bolanos R."/>
            <person name="Fasulo D."/>
            <person name="Halldorsson B.V."/>
            <person name="Hannenhalli S."/>
            <person name="Turner R."/>
            <person name="Yooseph S."/>
            <person name="Lu F."/>
            <person name="Nusskern D.R."/>
            <person name="Shue B.C."/>
            <person name="Zheng X.H."/>
            <person name="Zhong F."/>
            <person name="Delcher A.L."/>
            <person name="Huson D.H."/>
            <person name="Kravitz S.A."/>
            <person name="Mouchard L."/>
            <person name="Reinert K."/>
            <person name="Remington K.A."/>
            <person name="Clark A.G."/>
            <person name="Waterman M.S."/>
            <person name="Eichler E.E."/>
            <person name="Adams M.D."/>
            <person name="Hunkapiller M.W."/>
            <person name="Myers E.W."/>
            <person name="Venter J.C."/>
        </authorList>
    </citation>
    <scope>NUCLEOTIDE SEQUENCE [LARGE SCALE GENOMIC DNA]</scope>
</reference>
<reference key="7">
    <citation type="journal article" date="2004" name="Genome Res.">
        <title>The status, quality, and expansion of the NIH full-length cDNA project: the Mammalian Gene Collection (MGC).</title>
        <authorList>
            <consortium name="The MGC Project Team"/>
        </authorList>
    </citation>
    <scope>NUCLEOTIDE SEQUENCE [LARGE SCALE MRNA]</scope>
    <source>
        <tissue>Brain</tissue>
    </source>
</reference>
<reference key="8">
    <citation type="journal article" date="2008" name="Proc. Natl. Acad. Sci. U.S.A.">
        <title>A quantitative atlas of mitotic phosphorylation.</title>
        <authorList>
            <person name="Dephoure N."/>
            <person name="Zhou C."/>
            <person name="Villen J."/>
            <person name="Beausoleil S.A."/>
            <person name="Bakalarski C.E."/>
            <person name="Elledge S.J."/>
            <person name="Gygi S.P."/>
        </authorList>
    </citation>
    <scope>IDENTIFICATION BY MASS SPECTROMETRY [LARGE SCALE ANALYSIS]</scope>
    <source>
        <tissue>Cervix carcinoma</tissue>
    </source>
</reference>
<reference key="9">
    <citation type="journal article" date="2009" name="Mol. Cell. Proteomics">
        <title>Large-scale proteomics analysis of the human kinome.</title>
        <authorList>
            <person name="Oppermann F.S."/>
            <person name="Gnad F."/>
            <person name="Olsen J.V."/>
            <person name="Hornberger R."/>
            <person name="Greff Z."/>
            <person name="Keri G."/>
            <person name="Mann M."/>
            <person name="Daub H."/>
        </authorList>
    </citation>
    <scope>IDENTIFICATION BY MASS SPECTROMETRY [LARGE SCALE ANALYSIS]</scope>
</reference>
<reference key="10">
    <citation type="journal article" date="2009" name="Sci. Signal.">
        <title>Quantitative phosphoproteomic analysis of T cell receptor signaling reveals system-wide modulation of protein-protein interactions.</title>
        <authorList>
            <person name="Mayya V."/>
            <person name="Lundgren D.H."/>
            <person name="Hwang S.-I."/>
            <person name="Rezaul K."/>
            <person name="Wu L."/>
            <person name="Eng J.K."/>
            <person name="Rodionov V."/>
            <person name="Han D.K."/>
        </authorList>
    </citation>
    <scope>PHOSPHORYLATION [LARGE SCALE ANALYSIS] AT SER-261</scope>
    <scope>IDENTIFICATION BY MASS SPECTROMETRY [LARGE SCALE ANALYSIS]</scope>
    <source>
        <tissue>Leukemic T-cell</tissue>
    </source>
</reference>
<reference key="11">
    <citation type="journal article" date="2010" name="Sci. Signal.">
        <title>Quantitative phosphoproteomics reveals widespread full phosphorylation site occupancy during mitosis.</title>
        <authorList>
            <person name="Olsen J.V."/>
            <person name="Vermeulen M."/>
            <person name="Santamaria A."/>
            <person name="Kumar C."/>
            <person name="Miller M.L."/>
            <person name="Jensen L.J."/>
            <person name="Gnad F."/>
            <person name="Cox J."/>
            <person name="Jensen T.S."/>
            <person name="Nigg E.A."/>
            <person name="Brunak S."/>
            <person name="Mann M."/>
        </authorList>
    </citation>
    <scope>PHOSPHORYLATION [LARGE SCALE ANALYSIS] AT SER-238 AND SER-273</scope>
    <scope>IDENTIFICATION BY MASS SPECTROMETRY [LARGE SCALE ANALYSIS]</scope>
    <source>
        <tissue>Cervix carcinoma</tissue>
    </source>
</reference>
<reference key="12">
    <citation type="journal article" date="2011" name="Sci. Signal.">
        <title>System-wide temporal characterization of the proteome and phosphoproteome of human embryonic stem cell differentiation.</title>
        <authorList>
            <person name="Rigbolt K.T."/>
            <person name="Prokhorova T.A."/>
            <person name="Akimov V."/>
            <person name="Henningsen J."/>
            <person name="Johansen P.T."/>
            <person name="Kratchmarova I."/>
            <person name="Kassem M."/>
            <person name="Mann M."/>
            <person name="Olsen J.V."/>
            <person name="Blagoev B."/>
        </authorList>
    </citation>
    <scope>PHOSPHORYLATION [LARGE SCALE ANALYSIS] AT SER-238</scope>
    <scope>IDENTIFICATION BY MASS SPECTROMETRY [LARGE SCALE ANALYSIS]</scope>
</reference>
<reference key="13">
    <citation type="journal article" date="2013" name="J. Proteome Res.">
        <title>Toward a comprehensive characterization of a human cancer cell phosphoproteome.</title>
        <authorList>
            <person name="Zhou H."/>
            <person name="Di Palma S."/>
            <person name="Preisinger C."/>
            <person name="Peng M."/>
            <person name="Polat A.N."/>
            <person name="Heck A.J."/>
            <person name="Mohammed S."/>
        </authorList>
    </citation>
    <scope>PHOSPHORYLATION [LARGE SCALE ANALYSIS] AT THR-30; SER-41; SER-103; SER-110 AND SER-238</scope>
    <scope>IDENTIFICATION BY MASS SPECTROMETRY [LARGE SCALE ANALYSIS]</scope>
    <source>
        <tissue>Cervix carcinoma</tissue>
        <tissue>Erythroleukemia</tissue>
    </source>
</reference>
<reference key="14">
    <citation type="journal article" date="2014" name="J. Proteomics">
        <title>An enzyme assisted RP-RPLC approach for in-depth analysis of human liver phosphoproteome.</title>
        <authorList>
            <person name="Bian Y."/>
            <person name="Song C."/>
            <person name="Cheng K."/>
            <person name="Dong M."/>
            <person name="Wang F."/>
            <person name="Huang J."/>
            <person name="Sun D."/>
            <person name="Wang L."/>
            <person name="Ye M."/>
            <person name="Zou H."/>
        </authorList>
    </citation>
    <scope>IDENTIFICATION BY MASS SPECTROMETRY [LARGE SCALE ANALYSIS]</scope>
    <source>
        <tissue>Liver</tissue>
    </source>
</reference>
<reference key="15">
    <citation type="journal article" date="2015" name="Proteomics">
        <title>N-terminome analysis of the human mitochondrial proteome.</title>
        <authorList>
            <person name="Vaca Jacome A.S."/>
            <person name="Rabilloud T."/>
            <person name="Schaeffer-Reiss C."/>
            <person name="Rompais M."/>
            <person name="Ayoub D."/>
            <person name="Lane L."/>
            <person name="Bairoch A."/>
            <person name="Van Dorsselaer A."/>
            <person name="Carapito C."/>
        </authorList>
    </citation>
    <scope>IDENTIFICATION BY MASS SPECTROMETRY [LARGE SCALE ANALYSIS]</scope>
</reference>
<reference key="16">
    <citation type="journal article" date="2022" name="Sci. Adv.">
        <title>AMPK-dependent phosphorylation of MTFR1L regulates mitochondrial morphology.</title>
        <authorList>
            <person name="Tilokani L."/>
            <person name="Russell F.M."/>
            <person name="Hamilton S."/>
            <person name="Virga D.M."/>
            <person name="Segawa M."/>
            <person name="Paupe V."/>
            <person name="Gruszczyk A.V."/>
            <person name="Protasoni M."/>
            <person name="Tabara L.C."/>
            <person name="Johnson M."/>
            <person name="Anand H."/>
            <person name="Murphy M.P."/>
            <person name="Hardie D.G."/>
            <person name="Polleux F."/>
            <person name="Prudent J."/>
        </authorList>
    </citation>
    <scope>FUNCTION</scope>
    <scope>SUBCELLULAR LOCATION</scope>
    <scope>PHOSPHORYLATION AT SER-103 AND SER-238</scope>
    <scope>MUTAGENESIS OF SER-103 AND SER-238</scope>
</reference>
<protein>
    <recommendedName>
        <fullName>Mitochondrial fission regulator 1-like</fullName>
    </recommendedName>
</protein>
<keyword id="KW-0025">Alternative splicing</keyword>
<keyword id="KW-0472">Membrane</keyword>
<keyword id="KW-0496">Mitochondrion</keyword>
<keyword id="KW-1000">Mitochondrion outer membrane</keyword>
<keyword id="KW-0597">Phosphoprotein</keyword>
<keyword id="KW-1267">Proteomics identification</keyword>
<keyword id="KW-1185">Reference proteome</keyword>